<name>SRP54_BOVIN</name>
<dbReference type="EC" id="3.6.5.4" evidence="3"/>
<dbReference type="EMBL" id="BC111270">
    <property type="protein sequence ID" value="AAI11271.1"/>
    <property type="molecule type" value="mRNA"/>
</dbReference>
<dbReference type="RefSeq" id="NP_001033290.1">
    <property type="nucleotide sequence ID" value="NM_001038201.2"/>
</dbReference>
<dbReference type="RefSeq" id="XP_005222113.1">
    <property type="nucleotide sequence ID" value="XM_005222056.5"/>
</dbReference>
<dbReference type="RefSeq" id="XP_005222114.1">
    <property type="nucleotide sequence ID" value="XM_005222057.5"/>
</dbReference>
<dbReference type="RefSeq" id="XP_024837692.1">
    <property type="nucleotide sequence ID" value="XM_024981924.1"/>
</dbReference>
<dbReference type="SMR" id="Q2T9U1"/>
<dbReference type="FunCoup" id="Q2T9U1">
    <property type="interactions" value="3114"/>
</dbReference>
<dbReference type="STRING" id="9913.ENSBTAP00000025405"/>
<dbReference type="PaxDb" id="9913-ENSBTAP00000025405"/>
<dbReference type="PeptideAtlas" id="Q2T9U1"/>
<dbReference type="Ensembl" id="ENSBTAT00000025405.6">
    <property type="protein sequence ID" value="ENSBTAP00000025405.5"/>
    <property type="gene ID" value="ENSBTAG00000019085.7"/>
</dbReference>
<dbReference type="GeneID" id="614017"/>
<dbReference type="KEGG" id="bta:614017"/>
<dbReference type="CTD" id="6729"/>
<dbReference type="VEuPathDB" id="HostDB:ENSBTAG00000019085"/>
<dbReference type="VGNC" id="VGNC:35285">
    <property type="gene designation" value="SRP54"/>
</dbReference>
<dbReference type="eggNOG" id="KOG0780">
    <property type="taxonomic scope" value="Eukaryota"/>
</dbReference>
<dbReference type="GeneTree" id="ENSGT00550000074824"/>
<dbReference type="HOGENOM" id="CLU_009301_6_1_1"/>
<dbReference type="InParanoid" id="Q2T9U1"/>
<dbReference type="OMA" id="GMTGQDA"/>
<dbReference type="OrthoDB" id="10250817at2759"/>
<dbReference type="TreeFam" id="TF106249"/>
<dbReference type="Reactome" id="R-BTA-1799339">
    <property type="pathway name" value="SRP-dependent cotranslational protein targeting to membrane"/>
</dbReference>
<dbReference type="Proteomes" id="UP000009136">
    <property type="component" value="Chromosome 21"/>
</dbReference>
<dbReference type="Bgee" id="ENSBTAG00000019085">
    <property type="expression patterns" value="Expressed in semen and 108 other cell types or tissues"/>
</dbReference>
<dbReference type="GO" id="GO:0005829">
    <property type="term" value="C:cytosol"/>
    <property type="evidence" value="ECO:0000318"/>
    <property type="project" value="GO_Central"/>
</dbReference>
<dbReference type="GO" id="GO:0005783">
    <property type="term" value="C:endoplasmic reticulum"/>
    <property type="evidence" value="ECO:0007669"/>
    <property type="project" value="UniProtKB-SubCell"/>
</dbReference>
<dbReference type="GO" id="GO:0016607">
    <property type="term" value="C:nuclear speck"/>
    <property type="evidence" value="ECO:0007669"/>
    <property type="project" value="UniProtKB-SubCell"/>
</dbReference>
<dbReference type="GO" id="GO:0005634">
    <property type="term" value="C:nucleus"/>
    <property type="evidence" value="ECO:0000250"/>
    <property type="project" value="UniProtKB"/>
</dbReference>
<dbReference type="GO" id="GO:0005786">
    <property type="term" value="C:signal recognition particle, endoplasmic reticulum targeting"/>
    <property type="evidence" value="ECO:0000250"/>
    <property type="project" value="UniProtKB"/>
</dbReference>
<dbReference type="GO" id="GO:0008312">
    <property type="term" value="F:7S RNA binding"/>
    <property type="evidence" value="ECO:0000250"/>
    <property type="project" value="UniProtKB"/>
</dbReference>
<dbReference type="GO" id="GO:0016887">
    <property type="term" value="F:ATP hydrolysis activity"/>
    <property type="evidence" value="ECO:0007669"/>
    <property type="project" value="InterPro"/>
</dbReference>
<dbReference type="GO" id="GO:0030942">
    <property type="term" value="F:endoplasmic reticulum signal peptide binding"/>
    <property type="evidence" value="ECO:0000250"/>
    <property type="project" value="UniProtKB"/>
</dbReference>
<dbReference type="GO" id="GO:0019003">
    <property type="term" value="F:GDP binding"/>
    <property type="evidence" value="ECO:0000250"/>
    <property type="project" value="UniProtKB"/>
</dbReference>
<dbReference type="GO" id="GO:0005525">
    <property type="term" value="F:GTP binding"/>
    <property type="evidence" value="ECO:0000250"/>
    <property type="project" value="UniProtKB"/>
</dbReference>
<dbReference type="GO" id="GO:0003924">
    <property type="term" value="F:GTPase activity"/>
    <property type="evidence" value="ECO:0000250"/>
    <property type="project" value="UniProtKB"/>
</dbReference>
<dbReference type="GO" id="GO:0043021">
    <property type="term" value="F:ribonucleoprotein complex binding"/>
    <property type="evidence" value="ECO:0007669"/>
    <property type="project" value="Ensembl"/>
</dbReference>
<dbReference type="GO" id="GO:0031017">
    <property type="term" value="P:exocrine pancreas development"/>
    <property type="evidence" value="ECO:0000250"/>
    <property type="project" value="UniProtKB"/>
</dbReference>
<dbReference type="GO" id="GO:0030851">
    <property type="term" value="P:granulocyte differentiation"/>
    <property type="evidence" value="ECO:0000250"/>
    <property type="project" value="UniProtKB"/>
</dbReference>
<dbReference type="GO" id="GO:0030593">
    <property type="term" value="P:neutrophil chemotaxis"/>
    <property type="evidence" value="ECO:0000250"/>
    <property type="project" value="UniProtKB"/>
</dbReference>
<dbReference type="GO" id="GO:0045047">
    <property type="term" value="P:protein targeting to ER"/>
    <property type="evidence" value="ECO:0000250"/>
    <property type="project" value="UniProtKB"/>
</dbReference>
<dbReference type="GO" id="GO:0006616">
    <property type="term" value="P:SRP-dependent cotranslational protein targeting to membrane, translocation"/>
    <property type="evidence" value="ECO:0000318"/>
    <property type="project" value="GO_Central"/>
</dbReference>
<dbReference type="CDD" id="cd17875">
    <property type="entry name" value="SRP54_G"/>
    <property type="match status" value="1"/>
</dbReference>
<dbReference type="FunFam" id="1.10.260.30:FF:000002">
    <property type="entry name" value="Signal recognition particle 54 kDa protein"/>
    <property type="match status" value="1"/>
</dbReference>
<dbReference type="FunFam" id="1.20.120.140:FF:000003">
    <property type="entry name" value="Signal recognition particle 54 kDa protein"/>
    <property type="match status" value="1"/>
</dbReference>
<dbReference type="FunFam" id="3.40.50.300:FF:000022">
    <property type="entry name" value="Signal recognition particle 54 kDa subunit"/>
    <property type="match status" value="1"/>
</dbReference>
<dbReference type="Gene3D" id="3.40.50.300">
    <property type="entry name" value="P-loop containing nucleotide triphosphate hydrolases"/>
    <property type="match status" value="1"/>
</dbReference>
<dbReference type="Gene3D" id="1.20.120.140">
    <property type="entry name" value="Signal recognition particle SRP54, nucleotide-binding domain"/>
    <property type="match status" value="1"/>
</dbReference>
<dbReference type="Gene3D" id="1.10.260.30">
    <property type="entry name" value="Signal recognition particle, SRP54 subunit, M-domain"/>
    <property type="match status" value="1"/>
</dbReference>
<dbReference type="HAMAP" id="MF_00306">
    <property type="entry name" value="SRP54"/>
    <property type="match status" value="1"/>
</dbReference>
<dbReference type="InterPro" id="IPR003593">
    <property type="entry name" value="AAA+_ATPase"/>
</dbReference>
<dbReference type="InterPro" id="IPR027417">
    <property type="entry name" value="P-loop_NTPase"/>
</dbReference>
<dbReference type="InterPro" id="IPR036891">
    <property type="entry name" value="Signal_recog_part_SRP54_M_sf"/>
</dbReference>
<dbReference type="InterPro" id="IPR013822">
    <property type="entry name" value="Signal_recog_particl_SRP54_hlx"/>
</dbReference>
<dbReference type="InterPro" id="IPR004125">
    <property type="entry name" value="Signal_recog_particle_SRP54_M"/>
</dbReference>
<dbReference type="InterPro" id="IPR036225">
    <property type="entry name" value="SRP/SRP_N"/>
</dbReference>
<dbReference type="InterPro" id="IPR022941">
    <property type="entry name" value="SRP54"/>
</dbReference>
<dbReference type="InterPro" id="IPR006325">
    <property type="entry name" value="SRP54_euk"/>
</dbReference>
<dbReference type="InterPro" id="IPR000897">
    <property type="entry name" value="SRP54_GTPase_dom"/>
</dbReference>
<dbReference type="InterPro" id="IPR042101">
    <property type="entry name" value="SRP54_N_sf"/>
</dbReference>
<dbReference type="NCBIfam" id="TIGR01425">
    <property type="entry name" value="SRP54_euk"/>
    <property type="match status" value="1"/>
</dbReference>
<dbReference type="PANTHER" id="PTHR11564">
    <property type="entry name" value="SIGNAL RECOGNITION PARTICLE 54K PROTEIN SRP54"/>
    <property type="match status" value="1"/>
</dbReference>
<dbReference type="PANTHER" id="PTHR11564:SF5">
    <property type="entry name" value="SIGNAL RECOGNITION PARTICLE SUBUNIT SRP54"/>
    <property type="match status" value="1"/>
</dbReference>
<dbReference type="Pfam" id="PF00448">
    <property type="entry name" value="SRP54"/>
    <property type="match status" value="1"/>
</dbReference>
<dbReference type="Pfam" id="PF02881">
    <property type="entry name" value="SRP54_N"/>
    <property type="match status" value="1"/>
</dbReference>
<dbReference type="Pfam" id="PF02978">
    <property type="entry name" value="SRP_SPB"/>
    <property type="match status" value="1"/>
</dbReference>
<dbReference type="SMART" id="SM00382">
    <property type="entry name" value="AAA"/>
    <property type="match status" value="1"/>
</dbReference>
<dbReference type="SMART" id="SM00962">
    <property type="entry name" value="SRP54"/>
    <property type="match status" value="1"/>
</dbReference>
<dbReference type="SMART" id="SM00963">
    <property type="entry name" value="SRP54_N"/>
    <property type="match status" value="1"/>
</dbReference>
<dbReference type="SUPFAM" id="SSF47364">
    <property type="entry name" value="Domain of the SRP/SRP receptor G-proteins"/>
    <property type="match status" value="1"/>
</dbReference>
<dbReference type="SUPFAM" id="SSF52540">
    <property type="entry name" value="P-loop containing nucleoside triphosphate hydrolases"/>
    <property type="match status" value="1"/>
</dbReference>
<dbReference type="SUPFAM" id="SSF47446">
    <property type="entry name" value="Signal peptide-binding domain"/>
    <property type="match status" value="1"/>
</dbReference>
<dbReference type="PROSITE" id="PS00300">
    <property type="entry name" value="SRP54"/>
    <property type="match status" value="1"/>
</dbReference>
<proteinExistence type="evidence at transcript level"/>
<organism>
    <name type="scientific">Bos taurus</name>
    <name type="common">Bovine</name>
    <dbReference type="NCBI Taxonomy" id="9913"/>
    <lineage>
        <taxon>Eukaryota</taxon>
        <taxon>Metazoa</taxon>
        <taxon>Chordata</taxon>
        <taxon>Craniata</taxon>
        <taxon>Vertebrata</taxon>
        <taxon>Euteleostomi</taxon>
        <taxon>Mammalia</taxon>
        <taxon>Eutheria</taxon>
        <taxon>Laurasiatheria</taxon>
        <taxon>Artiodactyla</taxon>
        <taxon>Ruminantia</taxon>
        <taxon>Pecora</taxon>
        <taxon>Bovidae</taxon>
        <taxon>Bovinae</taxon>
        <taxon>Bos</taxon>
    </lineage>
</organism>
<protein>
    <recommendedName>
        <fullName>Signal recognition particle subunit SRP54</fullName>
        <ecNumber evidence="3">3.6.5.4</ecNumber>
    </recommendedName>
    <alternativeName>
        <fullName>Signal recognition particle 54 kDa protein</fullName>
    </alternativeName>
</protein>
<reference key="1">
    <citation type="submission" date="2005-12" db="EMBL/GenBank/DDBJ databases">
        <authorList>
            <consortium name="NIH - Mammalian Gene Collection (MGC) project"/>
        </authorList>
    </citation>
    <scope>NUCLEOTIDE SEQUENCE [LARGE SCALE MRNA]</scope>
    <source>
        <strain>Crossbred X Angus</strain>
        <tissue>Liver</tissue>
    </source>
</reference>
<accession>Q2T9U1</accession>
<evidence type="ECO:0000250" key="1"/>
<evidence type="ECO:0000250" key="2">
    <source>
        <dbReference type="UniProtKB" id="P61010"/>
    </source>
</evidence>
<evidence type="ECO:0000250" key="3">
    <source>
        <dbReference type="UniProtKB" id="P61011"/>
    </source>
</evidence>
<evidence type="ECO:0000305" key="4"/>
<gene>
    <name type="primary">SRP54</name>
</gene>
<keyword id="KW-0963">Cytoplasm</keyword>
<keyword id="KW-0256">Endoplasmic reticulum</keyword>
<keyword id="KW-0342">GTP-binding</keyword>
<keyword id="KW-0378">Hydrolase</keyword>
<keyword id="KW-0547">Nucleotide-binding</keyword>
<keyword id="KW-0539">Nucleus</keyword>
<keyword id="KW-1185">Reference proteome</keyword>
<keyword id="KW-0687">Ribonucleoprotein</keyword>
<keyword id="KW-0694">RNA-binding</keyword>
<keyword id="KW-0733">Signal recognition particle</keyword>
<feature type="chain" id="PRO_0000282926" description="Signal recognition particle subunit SRP54">
    <location>
        <begin position="1"/>
        <end position="504"/>
    </location>
</feature>
<feature type="region of interest" description="NG-domain" evidence="3">
    <location>
        <begin position="1"/>
        <end position="295"/>
    </location>
</feature>
<feature type="region of interest" description="M-domain" evidence="3">
    <location>
        <begin position="296"/>
        <end position="504"/>
    </location>
</feature>
<feature type="binding site" evidence="1">
    <location>
        <begin position="108"/>
        <end position="115"/>
    </location>
    <ligand>
        <name>GTP</name>
        <dbReference type="ChEBI" id="CHEBI:37565"/>
    </ligand>
</feature>
<feature type="binding site" evidence="1">
    <location>
        <begin position="190"/>
        <end position="194"/>
    </location>
    <ligand>
        <name>GTP</name>
        <dbReference type="ChEBI" id="CHEBI:37565"/>
    </ligand>
</feature>
<feature type="binding site" evidence="1">
    <location>
        <begin position="248"/>
        <end position="251"/>
    </location>
    <ligand>
        <name>GTP</name>
        <dbReference type="ChEBI" id="CHEBI:37565"/>
    </ligand>
</feature>
<comment type="function">
    <text evidence="2 3">Component of the signal recognition particle (SRP) complex, a ribonucleoprotein complex that mediates the cotranslational targeting of secretory and membrane proteins to the endoplasmic reticulum (ER) (By similarity). As part of the SRP complex, associates with the SRP receptor (SR) component SRPRA to target secretory proteins to the endoplasmic reticulum membrane (By similarity). Binds to the signal sequence of presecretory proteins when they emerge from the ribosomes (By similarity). Displays basal GTPase activity, and stimulates reciprocal GTPase activation of the SR subunit SRPRA (By similarity). Forms a guanosine 5'-triphosphate (GTP)-dependent complex with the SR subunit SRPRA (By similarity). SR compaction and GTPase mediated rearrangement of SR drive SRP-mediated cotranslational protein translocation into the ER (By similarity). Requires the presence of SRP9/SRP14 and/or SRP19 to stably interact with RNA (By similarity). Plays a role in proliferation and differentiation of granulocytic cells, neutrophils migration capacity and exocrine pancreas development (By similarity).</text>
</comment>
<comment type="catalytic activity">
    <reaction evidence="3">
        <text>GTP + H2O = GDP + phosphate + H(+)</text>
        <dbReference type="Rhea" id="RHEA:19669"/>
        <dbReference type="ChEBI" id="CHEBI:15377"/>
        <dbReference type="ChEBI" id="CHEBI:15378"/>
        <dbReference type="ChEBI" id="CHEBI:37565"/>
        <dbReference type="ChEBI" id="CHEBI:43474"/>
        <dbReference type="ChEBI" id="CHEBI:58189"/>
        <dbReference type="EC" id="3.6.5.4"/>
    </reaction>
    <physiologicalReaction direction="left-to-right" evidence="3">
        <dbReference type="Rhea" id="RHEA:19670"/>
    </physiologicalReaction>
</comment>
<comment type="subunit">
    <text evidence="3">Component of a signal recognition particle (SRP) complex that consists of a 7SL RNA molecule of 300 nucleotides and six protein subunits: SRP72, SRP68, SRP54, SRP19, SRP14 and SRP9 (By similarity). Interacts with RNPS1 (By similarity). Interacts with the SRP receptor subunit SRPRA (By similarity).</text>
</comment>
<comment type="subcellular location">
    <subcellularLocation>
        <location evidence="3">Nucleus speckle</location>
    </subcellularLocation>
    <subcellularLocation>
        <location evidence="3">Cytoplasm</location>
    </subcellularLocation>
    <subcellularLocation>
        <location evidence="3">Endoplasmic reticulum</location>
    </subcellularLocation>
</comment>
<comment type="domain">
    <text evidence="3">The NG domain, also named G domain, is a special guanosine triphosphatase (GTPase) domain, which binds GTP and forms a guanosine 5'-triphosphate (GTP)-dependent complex with a homologous NG domain in the SRP receptor subunit SRPRA (By similarity). The two NG domains undergo cooperative rearrangements upon their assembly, which culminate in the reciprocal activation of the GTPase activity of one another (By similarity). SRP receptor compaction upon binding with cargo-loaded SRP and GTPase rearrangement drive SRP-mediated cotranslational protein translocation into the ER (By similarity).</text>
</comment>
<comment type="domain">
    <text evidence="3">The M domain binds the 7SL RNA in presence of SRP19 and binds the signal sequence of presecretory proteins.</text>
</comment>
<comment type="similarity">
    <text evidence="4">Belongs to the GTP-binding SRP family. SRP54 subfamily.</text>
</comment>
<sequence length="504" mass="55705">MVLADLGRKITSALRSLSNATIINEEVLNAMLKEVCTALLEADVNIKLVKQLRENVKSAIDLEEMASGLNKRKMIQHAVFKELVKLVDPGVKAWTPTKGKQNVIMFVGLQGSGKTTTCSKLAYYYQRKGWKTCLICADTFRAGAFDQLKQNATKARIPFYGSYTEMDPVIIASEGVEKFKNENFEIIIVDTSGRHKQEDSLFEEMLQVANAIQPDNIVYVMDASIGQACEAQAKAFKDKVDVASVIVTKLDGHAKGGGALSAVAATKSPIIFIGTGEHIDDFEPFKTQPFISKLLGMGDIEGLIDKVNELKLDDNEALIEKLKHGQFTLRDMYEQFQNIMKMGPFSQILGMIPGFGTDFMSKGNEQESMARLKKLMTIMDSMNDQELDSTDGAKVFSKQPGRIQRVARGSGVSTRDVQELLTQYTKFAQMVKKMGGIKGLFKGGDMSKNVSQSQMAKLNQQMAKMMDPRVLHHMGGMAGLQSMMRQFQQGAAGNMKGMMGFNNM</sequence>